<reference key="1">
    <citation type="journal article" date="2010" name="Nature">
        <title>Comparative genomics reveals mobile pathogenicity chromosomes in Fusarium.</title>
        <authorList>
            <person name="Ma L.-J."/>
            <person name="van der Does H.C."/>
            <person name="Borkovich K.A."/>
            <person name="Coleman J.J."/>
            <person name="Daboussi M.-J."/>
            <person name="Di Pietro A."/>
            <person name="Dufresne M."/>
            <person name="Freitag M."/>
            <person name="Grabherr M."/>
            <person name="Henrissat B."/>
            <person name="Houterman P.M."/>
            <person name="Kang S."/>
            <person name="Shim W.-B."/>
            <person name="Woloshuk C."/>
            <person name="Xie X."/>
            <person name="Xu J.-R."/>
            <person name="Antoniw J."/>
            <person name="Baker S.E."/>
            <person name="Bluhm B.H."/>
            <person name="Breakspear A."/>
            <person name="Brown D.W."/>
            <person name="Butchko R.A.E."/>
            <person name="Chapman S."/>
            <person name="Coulson R."/>
            <person name="Coutinho P.M."/>
            <person name="Danchin E.G.J."/>
            <person name="Diener A."/>
            <person name="Gale L.R."/>
            <person name="Gardiner D.M."/>
            <person name="Goff S."/>
            <person name="Hammond-Kosack K.E."/>
            <person name="Hilburn K."/>
            <person name="Hua-Van A."/>
            <person name="Jonkers W."/>
            <person name="Kazan K."/>
            <person name="Kodira C.D."/>
            <person name="Koehrsen M."/>
            <person name="Kumar L."/>
            <person name="Lee Y.-H."/>
            <person name="Li L."/>
            <person name="Manners J.M."/>
            <person name="Miranda-Saavedra D."/>
            <person name="Mukherjee M."/>
            <person name="Park G."/>
            <person name="Park J."/>
            <person name="Park S.-Y."/>
            <person name="Proctor R.H."/>
            <person name="Regev A."/>
            <person name="Ruiz-Roldan M.C."/>
            <person name="Sain D."/>
            <person name="Sakthikumar S."/>
            <person name="Sykes S."/>
            <person name="Schwartz D.C."/>
            <person name="Turgeon B.G."/>
            <person name="Wapinski I."/>
            <person name="Yoder O."/>
            <person name="Young S."/>
            <person name="Zeng Q."/>
            <person name="Zhou S."/>
            <person name="Galagan J."/>
            <person name="Cuomo C.A."/>
            <person name="Kistler H.C."/>
            <person name="Rep M."/>
        </authorList>
    </citation>
    <scope>NUCLEOTIDE SEQUENCE [LARGE SCALE GENOMIC DNA]</scope>
    <source>
        <strain>M3125 / FGSC 7600</strain>
    </source>
</reference>
<reference key="2">
    <citation type="journal article" date="2022" name="Microbiol. Res.">
        <title>Transcriptome analysis of maize pathogen Fusarium verticillioides revealed FvLcp1, a secreted protein with type-D fungal LysM and chitin-binding domains, that plays important roles in pathogenesis and mycotoxin production.</title>
        <authorList>
            <person name="Zhang H."/>
            <person name="Kim M.S."/>
            <person name="Huang J."/>
            <person name="Yan H."/>
            <person name="Yang T."/>
            <person name="Song L."/>
            <person name="Yu W."/>
            <person name="Shim W.B."/>
        </authorList>
    </citation>
    <scope>FUNCTION</scope>
    <scope>INDUCTION</scope>
    <scope>SUBCELLULAR LOCATION</scope>
    <scope>CHITIN-BINDING</scope>
    <scope>DOMAIN</scope>
</reference>
<feature type="signal peptide" evidence="1">
    <location>
        <begin position="1"/>
        <end position="22"/>
    </location>
</feature>
<feature type="chain" id="PRO_5004898243" description="Non-secreted LysM effector LCP1">
    <location>
        <begin position="23"/>
        <end position="733"/>
    </location>
</feature>
<feature type="domain" description="LysM 1" evidence="4">
    <location>
        <begin position="211"/>
        <end position="256"/>
    </location>
</feature>
<feature type="domain" description="LysM 2" evidence="4">
    <location>
        <begin position="261"/>
        <end position="309"/>
    </location>
</feature>
<feature type="domain" description="LysM 3" evidence="4">
    <location>
        <begin position="347"/>
        <end position="393"/>
    </location>
</feature>
<feature type="domain" description="Chitin-binding type-1 1" evidence="2">
    <location>
        <begin position="634"/>
        <end position="680"/>
    </location>
</feature>
<feature type="domain" description="Chitin-binding type-1 2" evidence="2">
    <location>
        <begin position="688"/>
        <end position="733"/>
    </location>
</feature>
<feature type="region of interest" description="Disordered" evidence="5">
    <location>
        <begin position="605"/>
        <end position="637"/>
    </location>
</feature>
<feature type="compositionally biased region" description="Low complexity" evidence="5">
    <location>
        <begin position="605"/>
        <end position="629"/>
    </location>
</feature>
<feature type="glycosylation site" description="N-linked (GlcNAc...) asparagine" evidence="3">
    <location>
        <position position="298"/>
    </location>
</feature>
<feature type="glycosylation site" description="N-linked (GlcNAc...) asparagine" evidence="3">
    <location>
        <position position="304"/>
    </location>
</feature>
<feature type="glycosylation site" description="N-linked (GlcNAc...) asparagine" evidence="3">
    <location>
        <position position="340"/>
    </location>
</feature>
<feature type="glycosylation site" description="N-linked (GlcNAc...) asparagine" evidence="3">
    <location>
        <position position="350"/>
    </location>
</feature>
<feature type="glycosylation site" description="N-linked (GlcNAc...) asparagine" evidence="3">
    <location>
        <position position="381"/>
    </location>
</feature>
<feature type="glycosylation site" description="N-linked (GlcNAc...) asparagine" evidence="3">
    <location>
        <position position="432"/>
    </location>
</feature>
<feature type="glycosylation site" description="N-linked (GlcNAc...) asparagine" evidence="3">
    <location>
        <position position="442"/>
    </location>
</feature>
<feature type="glycosylation site" description="N-linked (GlcNAc...) asparagine" evidence="3">
    <location>
        <position position="455"/>
    </location>
</feature>
<feature type="glycosylation site" description="N-linked (GlcNAc...) asparagine" evidence="3">
    <location>
        <position position="538"/>
    </location>
</feature>
<feature type="glycosylation site" description="N-linked (GlcNAc...) asparagine" evidence="3">
    <location>
        <position position="630"/>
    </location>
</feature>
<feature type="disulfide bond" evidence="2">
    <location>
        <begin position="637"/>
        <end position="654"/>
    </location>
</feature>
<feature type="disulfide bond" evidence="2">
    <location>
        <begin position="645"/>
        <end position="660"/>
    </location>
</feature>
<feature type="disulfide bond" evidence="2">
    <location>
        <begin position="653"/>
        <end position="667"/>
    </location>
</feature>
<feature type="disulfide bond" evidence="2">
    <location>
        <begin position="671"/>
        <end position="678"/>
    </location>
</feature>
<feature type="disulfide bond" evidence="2">
    <location>
        <begin position="691"/>
        <end position="708"/>
    </location>
</feature>
<feature type="disulfide bond" evidence="2">
    <location>
        <begin position="699"/>
        <end position="714"/>
    </location>
</feature>
<feature type="disulfide bond" evidence="2">
    <location>
        <begin position="707"/>
        <end position="721"/>
    </location>
</feature>
<feature type="disulfide bond" evidence="2">
    <location>
        <begin position="725"/>
        <end position="732"/>
    </location>
</feature>
<protein>
    <recommendedName>
        <fullName evidence="7">Non-secreted LysM effector LCP1</fullName>
    </recommendedName>
    <alternativeName>
        <fullName evidence="7">LysM domain-containing protein LCP1</fullName>
    </alternativeName>
    <alternativeName>
        <fullName evidence="7">LysM-containing protein 1</fullName>
    </alternativeName>
</protein>
<comment type="function">
    <text evidence="6">Secreted effector that enables the plant pathogenic fungus to manipulate host defenses for successful infection (PubMed:36126492). Not involved in host recognition and penetration but suppresses host cell death and promotes fumonisin biosynthesis while the pathogen colonizes maize kernels (PubMed:36126492).</text>
</comment>
<comment type="subcellular location">
    <subcellularLocation>
        <location evidence="6">Secreted</location>
    </subcellularLocation>
    <subcellularLocation>
        <location evidence="6">Cell membrane</location>
        <topology evidence="6">Peripheral membrane protein</topology>
    </subcellularLocation>
    <subcellularLocation>
        <location evidence="6">Vacuole</location>
    </subcellularLocation>
    <text evidence="6">Mainly localizes to plasma membrane, septum and vacuole in the vegetative growth stage and localizes in appressorium structure in the early infection stage.</text>
</comment>
<comment type="domain">
    <text evidence="9">The LysM (lysin motif) domains are small globular domains involved in binding chitin in eukaryotes. LCP1 contains 3 LysM domains.</text>
</comment>
<comment type="domain">
    <text evidence="6">The LysM domains play an important role in fumonisin production, while the chitin-binding domains are important for binding chitin.</text>
</comment>
<comment type="similarity">
    <text evidence="8">Belongs to the secreted LysM effector family.</text>
</comment>
<evidence type="ECO:0000255" key="1"/>
<evidence type="ECO:0000255" key="2">
    <source>
        <dbReference type="PROSITE-ProRule" id="PRU00261"/>
    </source>
</evidence>
<evidence type="ECO:0000255" key="3">
    <source>
        <dbReference type="PROSITE-ProRule" id="PRU00498"/>
    </source>
</evidence>
<evidence type="ECO:0000255" key="4">
    <source>
        <dbReference type="PROSITE-ProRule" id="PRU01118"/>
    </source>
</evidence>
<evidence type="ECO:0000256" key="5">
    <source>
        <dbReference type="SAM" id="MobiDB-lite"/>
    </source>
</evidence>
<evidence type="ECO:0000269" key="6">
    <source>
    </source>
</evidence>
<evidence type="ECO:0000303" key="7">
    <source>
    </source>
</evidence>
<evidence type="ECO:0000305" key="8"/>
<evidence type="ECO:0000305" key="9">
    <source>
    </source>
</evidence>
<proteinExistence type="evidence at protein level"/>
<sequence>MMRRPWLLSALVAWVKLPSVQGEDLFSLGEIDGSLLNGASDACVAAINTKVSCPSTLGLLHFDSDMELDTAEIKELCQGSCLTSLADLRDSVKRTCGSEVTFEDPVSGALWKASYLMEEAIYYAERACLRKGNGQYCNTWFQSAPADASLCDECYKLILWHNAQSPLSEDTSEQKEIYTSASSSCGYKKQPTQTYPPLLVSSPMATPSCSSEYTIKTGDTFLSVSESQRVSTHDLATANRLDSLVSDFPSSGKLCIRNQCDVYVVKSGDTCESIQSENGLSKARLRSWNPFINGYCDNISSYVNQTICISNPLGDYKVPENQDAAGFDTPAAVPDNIAPNTTTNCGLFHNVTAGDDCGTIGLKYSISLDDFIFLNSMIWPNCTNLWLRASYCVAPVGDIADYPGYGPEEDEWTIEPQESTEIAEIPHIGWLNDSRPYVPLANSTREDCWEYLWWNETYAGSPISCREAALGYELDLEQFFLWNPSLDQNEPDAVSPTYDFPCTISPFVSYCMQLASPTPVPKTPRVPPSPRAAGEIANCTRWFMGYFDCASQLSLSRMTMEKMYRYNPSLKEDCSGYTLGTFYCHETLDDLYHYDDALYGDDETSPITSSAPTSTTASSKTSSSAAQPTNVSTDGTCGGAKGKTCLNSAFGDCCSSSGYCGDSLPYCGGGCQSKFGKCDAGSEKISPDGTCGGDKEYTCEGSQFGDCCSQYGYCGRATDNCGKGCQKQYGVCT</sequence>
<keyword id="KW-1003">Cell membrane</keyword>
<keyword id="KW-0147">Chitin-binding</keyword>
<keyword id="KW-1015">Disulfide bond</keyword>
<keyword id="KW-0325">Glycoprotein</keyword>
<keyword id="KW-0472">Membrane</keyword>
<keyword id="KW-1185">Reference proteome</keyword>
<keyword id="KW-0677">Repeat</keyword>
<keyword id="KW-0964">Secreted</keyword>
<keyword id="KW-0732">Signal</keyword>
<keyword id="KW-0926">Vacuole</keyword>
<keyword id="KW-0843">Virulence</keyword>
<gene>
    <name evidence="7" type="primary">LCP1</name>
    <name type="ORF">FVEG_01584</name>
</gene>
<accession>W7LFX0</accession>
<dbReference type="EMBL" id="DS022243">
    <property type="protein sequence ID" value="EWG38333.1"/>
    <property type="molecule type" value="Genomic_DNA"/>
</dbReference>
<dbReference type="RefSeq" id="XP_018744524.1">
    <property type="nucleotide sequence ID" value="XM_018888585.1"/>
</dbReference>
<dbReference type="SMR" id="W7LFX0"/>
<dbReference type="STRING" id="334819.W7LFX0"/>
<dbReference type="EnsemblFungi" id="FVEG_01584T0">
    <property type="protein sequence ID" value="FVEG_01584T0"/>
    <property type="gene ID" value="FVEG_01584"/>
</dbReference>
<dbReference type="GeneID" id="30059862"/>
<dbReference type="KEGG" id="fvr:FVEG_01584"/>
<dbReference type="VEuPathDB" id="FungiDB:FVEG_01584"/>
<dbReference type="eggNOG" id="ENOG502SQAP">
    <property type="taxonomic scope" value="Eukaryota"/>
</dbReference>
<dbReference type="HOGENOM" id="CLU_010591_5_0_1"/>
<dbReference type="OMA" id="MINSTCG"/>
<dbReference type="OrthoDB" id="141544at110618"/>
<dbReference type="Proteomes" id="UP000009096">
    <property type="component" value="Chromosome 6"/>
</dbReference>
<dbReference type="GO" id="GO:0005576">
    <property type="term" value="C:extracellular region"/>
    <property type="evidence" value="ECO:0007669"/>
    <property type="project" value="UniProtKB-SubCell"/>
</dbReference>
<dbReference type="GO" id="GO:0005886">
    <property type="term" value="C:plasma membrane"/>
    <property type="evidence" value="ECO:0007669"/>
    <property type="project" value="UniProtKB-SubCell"/>
</dbReference>
<dbReference type="GO" id="GO:0005773">
    <property type="term" value="C:vacuole"/>
    <property type="evidence" value="ECO:0007669"/>
    <property type="project" value="UniProtKB-SubCell"/>
</dbReference>
<dbReference type="GO" id="GO:0008061">
    <property type="term" value="F:chitin binding"/>
    <property type="evidence" value="ECO:0007669"/>
    <property type="project" value="UniProtKB-KW"/>
</dbReference>
<dbReference type="CDD" id="cd11618">
    <property type="entry name" value="ChtBD1_1"/>
    <property type="match status" value="2"/>
</dbReference>
<dbReference type="CDD" id="cd00118">
    <property type="entry name" value="LysM"/>
    <property type="match status" value="1"/>
</dbReference>
<dbReference type="Gene3D" id="3.30.60.10">
    <property type="entry name" value="Endochitinase-like"/>
    <property type="match status" value="2"/>
</dbReference>
<dbReference type="Gene3D" id="3.10.350.10">
    <property type="entry name" value="LysM domain"/>
    <property type="match status" value="2"/>
</dbReference>
<dbReference type="InterPro" id="IPR001002">
    <property type="entry name" value="Chitin-bd_1"/>
</dbReference>
<dbReference type="InterPro" id="IPR036861">
    <property type="entry name" value="Endochitinase-like_sf"/>
</dbReference>
<dbReference type="InterPro" id="IPR052210">
    <property type="entry name" value="LysM1-like"/>
</dbReference>
<dbReference type="InterPro" id="IPR018392">
    <property type="entry name" value="LysM_dom"/>
</dbReference>
<dbReference type="InterPro" id="IPR036779">
    <property type="entry name" value="LysM_dom_sf"/>
</dbReference>
<dbReference type="PANTHER" id="PTHR34997">
    <property type="entry name" value="AM15"/>
    <property type="match status" value="1"/>
</dbReference>
<dbReference type="PANTHER" id="PTHR34997:SF2">
    <property type="entry name" value="LYSM DOMAIN-CONTAINING PROTEIN-RELATED"/>
    <property type="match status" value="1"/>
</dbReference>
<dbReference type="Pfam" id="PF01476">
    <property type="entry name" value="LysM"/>
    <property type="match status" value="2"/>
</dbReference>
<dbReference type="SMART" id="SM00270">
    <property type="entry name" value="ChtBD1"/>
    <property type="match status" value="2"/>
</dbReference>
<dbReference type="SMART" id="SM00257">
    <property type="entry name" value="LysM"/>
    <property type="match status" value="3"/>
</dbReference>
<dbReference type="SUPFAM" id="SSF54106">
    <property type="entry name" value="LysM domain"/>
    <property type="match status" value="1"/>
</dbReference>
<dbReference type="SUPFAM" id="SSF57016">
    <property type="entry name" value="Plant lectins/antimicrobial peptides"/>
    <property type="match status" value="2"/>
</dbReference>
<dbReference type="PROSITE" id="PS50941">
    <property type="entry name" value="CHIT_BIND_I_2"/>
    <property type="match status" value="2"/>
</dbReference>
<dbReference type="PROSITE" id="PS51782">
    <property type="entry name" value="LYSM"/>
    <property type="match status" value="3"/>
</dbReference>
<organism>
    <name type="scientific">Gibberella moniliformis (strain M3125 / FGSC 7600)</name>
    <name type="common">Maize ear and stalk rot fungus</name>
    <name type="synonym">Fusarium verticillioides</name>
    <dbReference type="NCBI Taxonomy" id="334819"/>
    <lineage>
        <taxon>Eukaryota</taxon>
        <taxon>Fungi</taxon>
        <taxon>Dikarya</taxon>
        <taxon>Ascomycota</taxon>
        <taxon>Pezizomycotina</taxon>
        <taxon>Sordariomycetes</taxon>
        <taxon>Hypocreomycetidae</taxon>
        <taxon>Hypocreales</taxon>
        <taxon>Nectriaceae</taxon>
        <taxon>Fusarium</taxon>
        <taxon>Fusarium fujikuroi species complex</taxon>
    </lineage>
</organism>
<name>LYSM1_GIBM7</name>